<comment type="function">
    <text>Potential calcium-dependent cell-adhesion protein. May be involved in the establishment and maintenance of specific neuronal connections in the brain.</text>
</comment>
<comment type="subcellular location">
    <subcellularLocation>
        <location evidence="1">Cell membrane</location>
        <topology evidence="1">Single-pass type I membrane protein</topology>
    </subcellularLocation>
</comment>
<dbReference type="RefSeq" id="NP_001076039.1">
    <property type="nucleotide sequence ID" value="NM_001082570.2"/>
</dbReference>
<dbReference type="SMR" id="Q5DRA5"/>
<dbReference type="FunCoup" id="Q5DRA5">
    <property type="interactions" value="4"/>
</dbReference>
<dbReference type="GlyCosmos" id="Q5DRA5">
    <property type="glycosylation" value="2 sites, No reported glycans"/>
</dbReference>
<dbReference type="Ensembl" id="ENSPTRT00000061833.3">
    <property type="protein sequence ID" value="ENSPTRP00000054376.3"/>
    <property type="gene ID" value="ENSPTRG00000017346.7"/>
</dbReference>
<dbReference type="GeneID" id="100034692"/>
<dbReference type="KEGG" id="ptr:100034692"/>
<dbReference type="CTD" id="56099"/>
<dbReference type="GeneTree" id="ENSGT00940000162232"/>
<dbReference type="InParanoid" id="Q5DRA5"/>
<dbReference type="OrthoDB" id="10840at9604"/>
<dbReference type="Proteomes" id="UP000002277">
    <property type="component" value="Chromosome 5"/>
</dbReference>
<dbReference type="Bgee" id="ENSPTRG00000017346">
    <property type="expression patterns" value="Expressed in dorsolateral prefrontal cortex and 21 other cell types or tissues"/>
</dbReference>
<dbReference type="GO" id="GO:0005886">
    <property type="term" value="C:plasma membrane"/>
    <property type="evidence" value="ECO:0007669"/>
    <property type="project" value="UniProtKB-SubCell"/>
</dbReference>
<dbReference type="GO" id="GO:0005509">
    <property type="term" value="F:calcium ion binding"/>
    <property type="evidence" value="ECO:0007669"/>
    <property type="project" value="InterPro"/>
</dbReference>
<dbReference type="GO" id="GO:0007156">
    <property type="term" value="P:homophilic cell adhesion via plasma membrane adhesion molecules"/>
    <property type="evidence" value="ECO:0007669"/>
    <property type="project" value="InterPro"/>
</dbReference>
<dbReference type="GO" id="GO:0007399">
    <property type="term" value="P:nervous system development"/>
    <property type="evidence" value="ECO:0007669"/>
    <property type="project" value="UniProtKB-ARBA"/>
</dbReference>
<dbReference type="CDD" id="cd11304">
    <property type="entry name" value="Cadherin_repeat"/>
    <property type="match status" value="6"/>
</dbReference>
<dbReference type="FunFam" id="2.60.40.60:FF:000004">
    <property type="entry name" value="Protocadherin 1 gamma 2"/>
    <property type="match status" value="1"/>
</dbReference>
<dbReference type="FunFam" id="2.60.40.60:FF:000001">
    <property type="entry name" value="Protocadherin alpha 2"/>
    <property type="match status" value="1"/>
</dbReference>
<dbReference type="FunFam" id="2.60.40.60:FF:000002">
    <property type="entry name" value="Protocadherin alpha 2"/>
    <property type="match status" value="1"/>
</dbReference>
<dbReference type="FunFam" id="2.60.40.60:FF:000006">
    <property type="entry name" value="Protocadherin alpha 2"/>
    <property type="match status" value="1"/>
</dbReference>
<dbReference type="FunFam" id="2.60.40.60:FF:000129">
    <property type="entry name" value="protocadherin alpha-C2 isoform X1"/>
    <property type="match status" value="1"/>
</dbReference>
<dbReference type="FunFam" id="2.60.40.60:FF:000018">
    <property type="entry name" value="Protocadherin gamma c3"/>
    <property type="match status" value="1"/>
</dbReference>
<dbReference type="Gene3D" id="2.60.40.60">
    <property type="entry name" value="Cadherins"/>
    <property type="match status" value="6"/>
</dbReference>
<dbReference type="InterPro" id="IPR002126">
    <property type="entry name" value="Cadherin-like_dom"/>
</dbReference>
<dbReference type="InterPro" id="IPR015919">
    <property type="entry name" value="Cadherin-like_sf"/>
</dbReference>
<dbReference type="InterPro" id="IPR032455">
    <property type="entry name" value="Cadherin_C"/>
</dbReference>
<dbReference type="InterPro" id="IPR031904">
    <property type="entry name" value="Cadherin_CBD"/>
</dbReference>
<dbReference type="InterPro" id="IPR020894">
    <property type="entry name" value="Cadherin_CS"/>
</dbReference>
<dbReference type="InterPro" id="IPR013164">
    <property type="entry name" value="Cadherin_N"/>
</dbReference>
<dbReference type="InterPro" id="IPR050174">
    <property type="entry name" value="Protocadherin/Cadherin-CA"/>
</dbReference>
<dbReference type="PANTHER" id="PTHR24028">
    <property type="entry name" value="CADHERIN-87A"/>
    <property type="match status" value="1"/>
</dbReference>
<dbReference type="PANTHER" id="PTHR24028:SF113">
    <property type="entry name" value="PROTOCADHERIN GAMMA-B7"/>
    <property type="match status" value="1"/>
</dbReference>
<dbReference type="Pfam" id="PF00028">
    <property type="entry name" value="Cadherin"/>
    <property type="match status" value="5"/>
</dbReference>
<dbReference type="Pfam" id="PF08266">
    <property type="entry name" value="Cadherin_2"/>
    <property type="match status" value="1"/>
</dbReference>
<dbReference type="Pfam" id="PF16492">
    <property type="entry name" value="Cadherin_C_2"/>
    <property type="match status" value="1"/>
</dbReference>
<dbReference type="Pfam" id="PF15974">
    <property type="entry name" value="Cadherin_tail"/>
    <property type="match status" value="1"/>
</dbReference>
<dbReference type="PRINTS" id="PR00205">
    <property type="entry name" value="CADHERIN"/>
</dbReference>
<dbReference type="SMART" id="SM00112">
    <property type="entry name" value="CA"/>
    <property type="match status" value="6"/>
</dbReference>
<dbReference type="SUPFAM" id="SSF49313">
    <property type="entry name" value="Cadherin-like"/>
    <property type="match status" value="6"/>
</dbReference>
<dbReference type="PROSITE" id="PS00232">
    <property type="entry name" value="CADHERIN_1"/>
    <property type="match status" value="5"/>
</dbReference>
<dbReference type="PROSITE" id="PS50268">
    <property type="entry name" value="CADHERIN_2"/>
    <property type="match status" value="6"/>
</dbReference>
<organism>
    <name type="scientific">Pan troglodytes</name>
    <name type="common">Chimpanzee</name>
    <dbReference type="NCBI Taxonomy" id="9598"/>
    <lineage>
        <taxon>Eukaryota</taxon>
        <taxon>Metazoa</taxon>
        <taxon>Chordata</taxon>
        <taxon>Craniata</taxon>
        <taxon>Vertebrata</taxon>
        <taxon>Euteleostomi</taxon>
        <taxon>Mammalia</taxon>
        <taxon>Eutheria</taxon>
        <taxon>Euarchontoglires</taxon>
        <taxon>Primates</taxon>
        <taxon>Haplorrhini</taxon>
        <taxon>Catarrhini</taxon>
        <taxon>Hominidae</taxon>
        <taxon>Pan</taxon>
    </lineage>
</organism>
<protein>
    <recommendedName>
        <fullName>Protocadherin gamma-B7</fullName>
        <shortName>PCDH-gamma-B7</shortName>
    </recommendedName>
</protein>
<evidence type="ECO:0000250" key="1"/>
<evidence type="ECO:0000255" key="2"/>
<evidence type="ECO:0000255" key="3">
    <source>
        <dbReference type="PROSITE-ProRule" id="PRU00043"/>
    </source>
</evidence>
<evidence type="ECO:0000256" key="4">
    <source>
        <dbReference type="SAM" id="MobiDB-lite"/>
    </source>
</evidence>
<sequence length="929" mass="100986">MGGSCAQRRRAGPRQVLFPLLLPLFYPTLCEPIRYSIPEELAKGSVVGNLAKDLGLSVLDVSARELRVSAEKLHFSVDAQSGDLLVKDRIDREQICKERRRCELQLEAVVENPLNIFHIIVVIEDVNDHAPQFQKDEINLEISESVSLGMGTILESAEDPDISMNSLSKYQLSPNEYFSLVEKDNPDGGKYPELVLQKTLDRETQSAHHLVLTALDGGDPPRSGTAQIRILVIDANDNPPVFSQDVYRVSLREDVPPGTSILRVKATDQDEGINSEITYSFFGVADKAQHVFSLDYTTGNILTQQPLDFEEVERYTMNIEAKDRGSLSTRCKVIVEVVDENDNSPEIIITSLSDQIMEDSPPGVVVALFKTRDRDSGENGEVRCSLSRGVPFKIHSSSNNYYKLVTDEALDREQTPEYNVTIAATDRGKPPLSSSKTITLHITDVNDNAPVFGQSAYLVHVPENNQPGASIAQVSASDPDFGPNGRVSYSLIASDLESRTLSSYVSVSAQSGVVFAQRAFDHEQLRTFELTLQARDQGSPALSANVSLRVLVGDRNDNAPRVLYPALGPDGSALFDTVPRAAQPGYLVTKVVAVDADSGHNAWLSYHVVQASEPGLFSLGLRTGEVRMVRALGDKDLVRQRLLVAVRDGGQPPLSATATLHLVFADSLQEVLPDFSDHPTPSDSQAEMQFYLVVALALISVLFLLAVILAIALRLRQSFSPTAGDCFESVLCSKSGPVGPPNYSEGTLPYAYNFCVPGDQMNPEFNFFASVDHCPATQDNLNKDSMLLASILTPSVEADKKILKQQAPPNTDWRFSQAQRPGTSGSQNGDDTGTWPNNQFDTEMLQAMILASASEAADGSSTLGGGAGTMGLSARYGPQFTLQHVPDYRQNVYIPGSNATLTNAAGKRDGKAPAGGNGNKKKSGKKEKK</sequence>
<keyword id="KW-0106">Calcium</keyword>
<keyword id="KW-0130">Cell adhesion</keyword>
<keyword id="KW-1003">Cell membrane</keyword>
<keyword id="KW-0325">Glycoprotein</keyword>
<keyword id="KW-0472">Membrane</keyword>
<keyword id="KW-1185">Reference proteome</keyword>
<keyword id="KW-0677">Repeat</keyword>
<keyword id="KW-0732">Signal</keyword>
<keyword id="KW-0812">Transmembrane</keyword>
<keyword id="KW-1133">Transmembrane helix</keyword>
<accession>Q5DRA5</accession>
<reference key="1">
    <citation type="journal article" date="2005" name="Nature">
        <title>Initial sequence of the chimpanzee genome and comparison with the human genome.</title>
        <authorList>
            <consortium name="Chimpanzee sequencing and analysis consortium"/>
        </authorList>
    </citation>
    <scope>NUCLEOTIDE SEQUENCE [LARGE SCALE GENOMIC DNA]</scope>
</reference>
<reference key="2">
    <citation type="journal article" date="2005" name="Genetics">
        <title>Comparative genomics and diversifying selection of the clustered vertebrate protocadherin genes.</title>
        <authorList>
            <person name="Wu Q."/>
        </authorList>
    </citation>
    <scope>IDENTIFICATION</scope>
</reference>
<gene>
    <name type="primary">PCDHGB7</name>
</gene>
<feature type="signal peptide" evidence="2">
    <location>
        <begin position="1"/>
        <end position="30"/>
    </location>
</feature>
<feature type="chain" id="PRO_0000003984" description="Protocadherin gamma-B7">
    <location>
        <begin position="31"/>
        <end position="929"/>
    </location>
</feature>
<feature type="topological domain" description="Extracellular" evidence="2">
    <location>
        <begin position="31"/>
        <end position="691"/>
    </location>
</feature>
<feature type="transmembrane region" description="Helical" evidence="2">
    <location>
        <begin position="692"/>
        <end position="712"/>
    </location>
</feature>
<feature type="topological domain" description="Cytoplasmic" evidence="2">
    <location>
        <begin position="713"/>
        <end position="929"/>
    </location>
</feature>
<feature type="domain" description="Cadherin 1" evidence="3">
    <location>
        <begin position="31"/>
        <end position="133"/>
    </location>
</feature>
<feature type="domain" description="Cadherin 2" evidence="3">
    <location>
        <begin position="134"/>
        <end position="242"/>
    </location>
</feature>
<feature type="domain" description="Cadherin 3" evidence="3">
    <location>
        <begin position="243"/>
        <end position="347"/>
    </location>
</feature>
<feature type="domain" description="Cadherin 4" evidence="3">
    <location>
        <begin position="348"/>
        <end position="452"/>
    </location>
</feature>
<feature type="domain" description="Cadherin 5" evidence="3">
    <location>
        <begin position="453"/>
        <end position="562"/>
    </location>
</feature>
<feature type="domain" description="Cadherin 6" evidence="3">
    <location>
        <begin position="570"/>
        <end position="675"/>
    </location>
</feature>
<feature type="region of interest" description="Disordered" evidence="4">
    <location>
        <begin position="806"/>
        <end position="838"/>
    </location>
</feature>
<feature type="region of interest" description="Disordered" evidence="4">
    <location>
        <begin position="899"/>
        <end position="929"/>
    </location>
</feature>
<feature type="compositionally biased region" description="Polar residues" evidence="4">
    <location>
        <begin position="807"/>
        <end position="838"/>
    </location>
</feature>
<feature type="compositionally biased region" description="Basic residues" evidence="4">
    <location>
        <begin position="919"/>
        <end position="929"/>
    </location>
</feature>
<feature type="glycosylation site" description="N-linked (GlcNAc...) asparagine" evidence="2">
    <location>
        <position position="419"/>
    </location>
</feature>
<feature type="glycosylation site" description="N-linked (GlcNAc...) asparagine" evidence="2">
    <location>
        <position position="545"/>
    </location>
</feature>
<name>PCDGJ_PANTR</name>
<proteinExistence type="inferred from homology"/>